<proteinExistence type="inferred from homology"/>
<accession>Q5FUL3</accession>
<name>RL27_GLUOX</name>
<evidence type="ECO:0000255" key="1">
    <source>
        <dbReference type="HAMAP-Rule" id="MF_00539"/>
    </source>
</evidence>
<evidence type="ECO:0000256" key="2">
    <source>
        <dbReference type="SAM" id="MobiDB-lite"/>
    </source>
</evidence>
<evidence type="ECO:0000305" key="3"/>
<protein>
    <recommendedName>
        <fullName evidence="1">Large ribosomal subunit protein bL27</fullName>
    </recommendedName>
    <alternativeName>
        <fullName evidence="3">50S ribosomal protein L27</fullName>
    </alternativeName>
</protein>
<organism>
    <name type="scientific">Gluconobacter oxydans (strain 621H)</name>
    <name type="common">Gluconobacter suboxydans</name>
    <dbReference type="NCBI Taxonomy" id="290633"/>
    <lineage>
        <taxon>Bacteria</taxon>
        <taxon>Pseudomonadati</taxon>
        <taxon>Pseudomonadota</taxon>
        <taxon>Alphaproteobacteria</taxon>
        <taxon>Acetobacterales</taxon>
        <taxon>Acetobacteraceae</taxon>
        <taxon>Gluconobacter</taxon>
    </lineage>
</organism>
<feature type="chain" id="PRO_0000181095" description="Large ribosomal subunit protein bL27">
    <location>
        <begin position="1"/>
        <end position="88"/>
    </location>
</feature>
<feature type="region of interest" description="Disordered" evidence="2">
    <location>
        <begin position="1"/>
        <end position="22"/>
    </location>
</feature>
<dbReference type="EMBL" id="CP000009">
    <property type="protein sequence ID" value="AAW59933.1"/>
    <property type="molecule type" value="Genomic_DNA"/>
</dbReference>
<dbReference type="RefSeq" id="WP_008851550.1">
    <property type="nucleotide sequence ID" value="NZ_LT900338.1"/>
</dbReference>
<dbReference type="SMR" id="Q5FUL3"/>
<dbReference type="STRING" id="290633.GOX0140"/>
<dbReference type="GeneID" id="56904412"/>
<dbReference type="KEGG" id="gox:GOX0140"/>
<dbReference type="eggNOG" id="COG0211">
    <property type="taxonomic scope" value="Bacteria"/>
</dbReference>
<dbReference type="HOGENOM" id="CLU_095424_4_0_5"/>
<dbReference type="Proteomes" id="UP000006375">
    <property type="component" value="Chromosome"/>
</dbReference>
<dbReference type="GO" id="GO:0022625">
    <property type="term" value="C:cytosolic large ribosomal subunit"/>
    <property type="evidence" value="ECO:0007669"/>
    <property type="project" value="TreeGrafter"/>
</dbReference>
<dbReference type="GO" id="GO:0003735">
    <property type="term" value="F:structural constituent of ribosome"/>
    <property type="evidence" value="ECO:0007669"/>
    <property type="project" value="InterPro"/>
</dbReference>
<dbReference type="GO" id="GO:0006412">
    <property type="term" value="P:translation"/>
    <property type="evidence" value="ECO:0007669"/>
    <property type="project" value="UniProtKB-UniRule"/>
</dbReference>
<dbReference type="FunFam" id="2.40.50.100:FF:000060">
    <property type="entry name" value="Apicoplast ribosomal protein L27"/>
    <property type="match status" value="1"/>
</dbReference>
<dbReference type="Gene3D" id="2.40.50.100">
    <property type="match status" value="1"/>
</dbReference>
<dbReference type="HAMAP" id="MF_00539">
    <property type="entry name" value="Ribosomal_bL27"/>
    <property type="match status" value="1"/>
</dbReference>
<dbReference type="InterPro" id="IPR001684">
    <property type="entry name" value="Ribosomal_bL27"/>
</dbReference>
<dbReference type="InterPro" id="IPR018261">
    <property type="entry name" value="Ribosomal_bL27_CS"/>
</dbReference>
<dbReference type="NCBIfam" id="TIGR00062">
    <property type="entry name" value="L27"/>
    <property type="match status" value="1"/>
</dbReference>
<dbReference type="PANTHER" id="PTHR15893:SF0">
    <property type="entry name" value="LARGE RIBOSOMAL SUBUNIT PROTEIN BL27M"/>
    <property type="match status" value="1"/>
</dbReference>
<dbReference type="PANTHER" id="PTHR15893">
    <property type="entry name" value="RIBOSOMAL PROTEIN L27"/>
    <property type="match status" value="1"/>
</dbReference>
<dbReference type="Pfam" id="PF01016">
    <property type="entry name" value="Ribosomal_L27"/>
    <property type="match status" value="1"/>
</dbReference>
<dbReference type="PRINTS" id="PR00063">
    <property type="entry name" value="RIBOSOMALL27"/>
</dbReference>
<dbReference type="SUPFAM" id="SSF110324">
    <property type="entry name" value="Ribosomal L27 protein-like"/>
    <property type="match status" value="1"/>
</dbReference>
<dbReference type="PROSITE" id="PS00831">
    <property type="entry name" value="RIBOSOMAL_L27"/>
    <property type="match status" value="1"/>
</dbReference>
<comment type="similarity">
    <text evidence="1">Belongs to the bacterial ribosomal protein bL27 family.</text>
</comment>
<sequence length="88" mass="9294">MAQKKAGGSSRNGRDSAGRRLGVKKFGGESVIAGNIIVRQRGTKMKAGANVGIGRDHTLFALVDGHVKFQRRAEGRVHVSVALPEAAE</sequence>
<gene>
    <name evidence="1" type="primary">rpmA</name>
    <name type="ordered locus">GOX0140</name>
</gene>
<reference key="1">
    <citation type="journal article" date="2005" name="Nat. Biotechnol.">
        <title>Complete genome sequence of the acetic acid bacterium Gluconobacter oxydans.</title>
        <authorList>
            <person name="Prust C."/>
            <person name="Hoffmeister M."/>
            <person name="Liesegang H."/>
            <person name="Wiezer A."/>
            <person name="Fricke W.F."/>
            <person name="Ehrenreich A."/>
            <person name="Gottschalk G."/>
            <person name="Deppenmeier U."/>
        </authorList>
    </citation>
    <scope>NUCLEOTIDE SEQUENCE [LARGE SCALE GENOMIC DNA]</scope>
    <source>
        <strain>621H</strain>
    </source>
</reference>
<keyword id="KW-1185">Reference proteome</keyword>
<keyword id="KW-0687">Ribonucleoprotein</keyword>
<keyword id="KW-0689">Ribosomal protein</keyword>